<proteinExistence type="inferred from homology"/>
<name>SYDP_PHOLL</name>
<feature type="chain" id="PRO_0000214139" description="Protein Syd">
    <location>
        <begin position="1"/>
        <end position="184"/>
    </location>
</feature>
<organism>
    <name type="scientific">Photorhabdus laumondii subsp. laumondii (strain DSM 15139 / CIP 105565 / TT01)</name>
    <name type="common">Photorhabdus luminescens subsp. laumondii</name>
    <dbReference type="NCBI Taxonomy" id="243265"/>
    <lineage>
        <taxon>Bacteria</taxon>
        <taxon>Pseudomonadati</taxon>
        <taxon>Pseudomonadota</taxon>
        <taxon>Gammaproteobacteria</taxon>
        <taxon>Enterobacterales</taxon>
        <taxon>Morganellaceae</taxon>
        <taxon>Photorhabdus</taxon>
    </lineage>
</organism>
<keyword id="KW-0997">Cell inner membrane</keyword>
<keyword id="KW-1003">Cell membrane</keyword>
<keyword id="KW-0472">Membrane</keyword>
<keyword id="KW-1185">Reference proteome</keyword>
<sequence>MISNVTEALSNFTRCYVDLWQKETGAPPASRELYGVPSPCITQTGDNIVYWLPQPFPLEEKLNSVEVALDIQLQPAIHDFYTSQLAGDMTVTFEGQRLSLIQVWSEDDFIRLQENLIGHLVTQKRLKLSPTAFIATMESDDMGIISLCNLTGEVILEQFGSHKRERLFTDLVGFLGAIEPVFMR</sequence>
<accession>P60155</accession>
<accession>Q7N8Q6</accession>
<dbReference type="EMBL" id="BX571861">
    <property type="protein sequence ID" value="CAE12958.1"/>
    <property type="molecule type" value="Genomic_DNA"/>
</dbReference>
<dbReference type="RefSeq" id="WP_011145039.1">
    <property type="nucleotide sequence ID" value="NC_005126.1"/>
</dbReference>
<dbReference type="SMR" id="P60155"/>
<dbReference type="STRING" id="243265.plu0663"/>
<dbReference type="GeneID" id="48846951"/>
<dbReference type="KEGG" id="plu:plu0663"/>
<dbReference type="eggNOG" id="ENOG502ZCMR">
    <property type="taxonomic scope" value="Bacteria"/>
</dbReference>
<dbReference type="HOGENOM" id="CLU_121866_0_0_6"/>
<dbReference type="OrthoDB" id="5599437at2"/>
<dbReference type="Proteomes" id="UP000002514">
    <property type="component" value="Chromosome"/>
</dbReference>
<dbReference type="GO" id="GO:0009898">
    <property type="term" value="C:cytoplasmic side of plasma membrane"/>
    <property type="evidence" value="ECO:0007669"/>
    <property type="project" value="InterPro"/>
</dbReference>
<dbReference type="CDD" id="cd16323">
    <property type="entry name" value="Syd"/>
    <property type="match status" value="1"/>
</dbReference>
<dbReference type="Gene3D" id="3.40.1580.20">
    <property type="entry name" value="Syd protein"/>
    <property type="match status" value="1"/>
</dbReference>
<dbReference type="HAMAP" id="MF_01104">
    <property type="entry name" value="Syd"/>
    <property type="match status" value="1"/>
</dbReference>
<dbReference type="InterPro" id="IPR009948">
    <property type="entry name" value="Syd"/>
</dbReference>
<dbReference type="InterPro" id="IPR038228">
    <property type="entry name" value="Syd_sf"/>
</dbReference>
<dbReference type="NCBIfam" id="NF003439">
    <property type="entry name" value="PRK04968.1"/>
    <property type="match status" value="1"/>
</dbReference>
<dbReference type="Pfam" id="PF07348">
    <property type="entry name" value="Syd"/>
    <property type="match status" value="1"/>
</dbReference>
<protein>
    <recommendedName>
        <fullName evidence="1">Protein Syd</fullName>
    </recommendedName>
</protein>
<evidence type="ECO:0000255" key="1">
    <source>
        <dbReference type="HAMAP-Rule" id="MF_01104"/>
    </source>
</evidence>
<gene>
    <name evidence="1" type="primary">syd</name>
    <name type="ordered locus">plu0663</name>
</gene>
<comment type="function">
    <text evidence="1">Interacts with the SecY protein in vivo. May bind preferentially to an uncomplexed state of SecY, thus functioning either as a chelating agent for excess SecY in the cell or as a regulatory factor that negatively controls the translocase function.</text>
</comment>
<comment type="subcellular location">
    <subcellularLocation>
        <location evidence="1">Cell inner membrane</location>
        <topology evidence="1">Peripheral membrane protein</topology>
        <orientation evidence="1">Cytoplasmic side</orientation>
    </subcellularLocation>
    <text evidence="1">Loosely associated with the cytoplasmic side of the inner membrane, probably via SecY.</text>
</comment>
<comment type="similarity">
    <text evidence="1">Belongs to the Syd family.</text>
</comment>
<reference key="1">
    <citation type="journal article" date="2003" name="Nat. Biotechnol.">
        <title>The genome sequence of the entomopathogenic bacterium Photorhabdus luminescens.</title>
        <authorList>
            <person name="Duchaud E."/>
            <person name="Rusniok C."/>
            <person name="Frangeul L."/>
            <person name="Buchrieser C."/>
            <person name="Givaudan A."/>
            <person name="Taourit S."/>
            <person name="Bocs S."/>
            <person name="Boursaux-Eude C."/>
            <person name="Chandler M."/>
            <person name="Charles J.-F."/>
            <person name="Dassa E."/>
            <person name="Derose R."/>
            <person name="Derzelle S."/>
            <person name="Freyssinet G."/>
            <person name="Gaudriault S."/>
            <person name="Medigue C."/>
            <person name="Lanois A."/>
            <person name="Powell K."/>
            <person name="Siguier P."/>
            <person name="Vincent R."/>
            <person name="Wingate V."/>
            <person name="Zouine M."/>
            <person name="Glaser P."/>
            <person name="Boemare N."/>
            <person name="Danchin A."/>
            <person name="Kunst F."/>
        </authorList>
    </citation>
    <scope>NUCLEOTIDE SEQUENCE [LARGE SCALE GENOMIC DNA]</scope>
    <source>
        <strain>DSM 15139 / CIP 105565 / TT01</strain>
    </source>
</reference>